<sequence>MGSEPPSSPQVVEEGADEEDEELSGAEDADLRSSSGRGSLLTRRGITLRVLLKDGLVEPGDGVLSIHYLGKKFVGDLLNDGKIRWVETGQIFNSPSAWATHCKRLVNPAKKSGCGWASVRYRGQKLVQYKTTWLHKYQPSADMSLISEGEDDEMGDDDEEEGKTTIPVEDKNKKSKPELHEIGLTQRRDRERIPVRYCTLGTRDAARDPHTLVELSAFSAINRFQPFNVAVSSNVLLLMDFHCHLTSSEVVGYLGGRWDTNTQLLTVLRAFPCRTRLADKDAAPAVEEEICQNLFMRGLSLVGWYHSHPRGPALPSLQDIDSQMDHQLRLQGSSNGFQPCLGIICGPYYHGNQGVASTITPFWVVPPPEQRPNDHGIPVAVEVTYVQDNFLTTDVLNEMMLLVEFYRSAPDLVQFSQMWSPNTSILDKIKASLSGHAPKDQAYAQILEHVYNQLRNTQ</sequence>
<organism>
    <name type="scientific">Danio rerio</name>
    <name type="common">Zebrafish</name>
    <name type="synonym">Brachydanio rerio</name>
    <dbReference type="NCBI Taxonomy" id="7955"/>
    <lineage>
        <taxon>Eukaryota</taxon>
        <taxon>Metazoa</taxon>
        <taxon>Chordata</taxon>
        <taxon>Craniata</taxon>
        <taxon>Vertebrata</taxon>
        <taxon>Euteleostomi</taxon>
        <taxon>Actinopterygii</taxon>
        <taxon>Neopterygii</taxon>
        <taxon>Teleostei</taxon>
        <taxon>Ostariophysi</taxon>
        <taxon>Cypriniformes</taxon>
        <taxon>Danionidae</taxon>
        <taxon>Danioninae</taxon>
        <taxon>Danio</taxon>
    </lineage>
</organism>
<protein>
    <recommendedName>
        <fullName evidence="7">MPN domain-containing protein</fullName>
        <ecNumber evidence="2">3.4.-.-</ecNumber>
    </recommendedName>
</protein>
<accession>Q08CH3</accession>
<feature type="chain" id="PRO_0000278806" description="MPN domain-containing protein">
    <location>
        <begin position="1"/>
        <end position="458"/>
    </location>
</feature>
<feature type="domain" description="RAMA" evidence="4">
    <location>
        <begin position="42"/>
        <end position="137"/>
    </location>
</feature>
<feature type="domain" description="MPN" evidence="5">
    <location>
        <begin position="229"/>
        <end position="364"/>
    </location>
</feature>
<feature type="region of interest" description="Disordered" evidence="6">
    <location>
        <begin position="1"/>
        <end position="37"/>
    </location>
</feature>
<feature type="region of interest" description="Disordered" evidence="6">
    <location>
        <begin position="147"/>
        <end position="175"/>
    </location>
</feature>
<feature type="short sequence motif" description="JAMM motif" evidence="5">
    <location>
        <begin position="306"/>
        <end position="319"/>
    </location>
</feature>
<feature type="compositionally biased region" description="Acidic residues" evidence="6">
    <location>
        <begin position="14"/>
        <end position="28"/>
    </location>
</feature>
<feature type="compositionally biased region" description="Acidic residues" evidence="6">
    <location>
        <begin position="148"/>
        <end position="161"/>
    </location>
</feature>
<feature type="binding site" evidence="1">
    <location>
        <position position="94"/>
    </location>
    <ligand>
        <name>DNA</name>
        <dbReference type="ChEBI" id="CHEBI:16991"/>
        <note>ligand shared between one subunit of each homodimer constituting the homotetramer</note>
    </ligand>
</feature>
<feature type="binding site" evidence="1">
    <location>
        <position position="96"/>
    </location>
    <ligand>
        <name>DNA</name>
        <dbReference type="ChEBI" id="CHEBI:16991"/>
        <note>ligand shared between one subunit of each homodimer constituting the homotetramer</note>
    </ligand>
</feature>
<feature type="binding site" evidence="1">
    <location>
        <position position="116"/>
    </location>
    <ligand>
        <name>DNA</name>
        <dbReference type="ChEBI" id="CHEBI:16991"/>
        <note>ligand shared between one subunit of each homodimer constituting the homotetramer</note>
    </ligand>
</feature>
<feature type="binding site" evidence="5">
    <location>
        <position position="306"/>
    </location>
    <ligand>
        <name>Zn(2+)</name>
        <dbReference type="ChEBI" id="CHEBI:29105"/>
        <note>catalytic</note>
    </ligand>
</feature>
<feature type="binding site" evidence="5">
    <location>
        <position position="308"/>
    </location>
    <ligand>
        <name>Zn(2+)</name>
        <dbReference type="ChEBI" id="CHEBI:29105"/>
        <note>catalytic</note>
    </ligand>
</feature>
<feature type="binding site" evidence="5">
    <location>
        <position position="319"/>
    </location>
    <ligand>
        <name>Zn(2+)</name>
        <dbReference type="ChEBI" id="CHEBI:29105"/>
        <note>catalytic</note>
    </ligand>
</feature>
<reference key="1">
    <citation type="submission" date="2006-09" db="EMBL/GenBank/DDBJ databases">
        <authorList>
            <consortium name="NIH - Zebrafish Gene Collection (ZGC) project"/>
        </authorList>
    </citation>
    <scope>NUCLEOTIDE SEQUENCE [LARGE SCALE MRNA]</scope>
    <source>
        <tissue>Ovary</tissue>
    </source>
</reference>
<gene>
    <name evidence="3" type="primary">mpnd</name>
    <name type="ORF">zgc:153076</name>
</gene>
<name>MPND_DANRE</name>
<keyword id="KW-0378">Hydrolase</keyword>
<keyword id="KW-0479">Metal-binding</keyword>
<keyword id="KW-0482">Metalloprotease</keyword>
<keyword id="KW-0645">Protease</keyword>
<keyword id="KW-1185">Reference proteome</keyword>
<keyword id="KW-0862">Zinc</keyword>
<comment type="function">
    <text evidence="1 2 3">Probable protease (By similarity). Acts as a sensor of N(6)-methyladenosine methylation on DNA (m6A): recognizes and binds m6A DNA, leading to its degradation (By similarity). Binds only double strand DNA (dsDNA) in a sequence-independent manner (By similarity).</text>
</comment>
<comment type="domain">
    <text evidence="1 3">The RAMA domain recognizes and binds N(6)-methyladenosine methylation on DNA (m6A) (By similarity). The RAMA domain mediates interaction with histones (By similarity).</text>
</comment>
<comment type="domain">
    <text evidence="1">The two acidic regions inhibit DNA binding. The two acidic regions promotes histone interaction.</text>
</comment>
<comment type="PTM">
    <text evidence="3">Degraded following binding to N(6)-methyladenosine methylated DNA (m6A).</text>
</comment>
<comment type="similarity">
    <text evidence="7">Belongs to the peptidase M67 family.</text>
</comment>
<evidence type="ECO:0000250" key="1">
    <source>
        <dbReference type="UniProtKB" id="Q3TV65"/>
    </source>
</evidence>
<evidence type="ECO:0000250" key="2">
    <source>
        <dbReference type="UniProtKB" id="Q5VVJ2"/>
    </source>
</evidence>
<evidence type="ECO:0000250" key="3">
    <source>
        <dbReference type="UniProtKB" id="Q8N594"/>
    </source>
</evidence>
<evidence type="ECO:0000255" key="4"/>
<evidence type="ECO:0000255" key="5">
    <source>
        <dbReference type="PROSITE-ProRule" id="PRU01182"/>
    </source>
</evidence>
<evidence type="ECO:0000256" key="6">
    <source>
        <dbReference type="SAM" id="MobiDB-lite"/>
    </source>
</evidence>
<evidence type="ECO:0000305" key="7"/>
<dbReference type="EC" id="3.4.-.-" evidence="2"/>
<dbReference type="EMBL" id="BC124239">
    <property type="protein sequence ID" value="AAI24240.1"/>
    <property type="molecule type" value="mRNA"/>
</dbReference>
<dbReference type="RefSeq" id="NP_001070033.1">
    <property type="nucleotide sequence ID" value="NM_001076565.1"/>
</dbReference>
<dbReference type="SMR" id="Q08CH3"/>
<dbReference type="FunCoup" id="Q08CH3">
    <property type="interactions" value="1127"/>
</dbReference>
<dbReference type="STRING" id="7955.ENSDARP00000083512"/>
<dbReference type="PaxDb" id="7955-ENSDARP00000083512"/>
<dbReference type="Ensembl" id="ENSDART00000089079">
    <property type="protein sequence ID" value="ENSDARP00000083512"/>
    <property type="gene ID" value="ENSDARG00000061989"/>
</dbReference>
<dbReference type="GeneID" id="559169"/>
<dbReference type="KEGG" id="dre:559169"/>
<dbReference type="AGR" id="ZFIN:ZDB-GENE-060929-1162"/>
<dbReference type="CTD" id="84954"/>
<dbReference type="ZFIN" id="ZDB-GENE-060929-1162">
    <property type="gene designation" value="mpnd"/>
</dbReference>
<dbReference type="eggNOG" id="KOG1555">
    <property type="taxonomic scope" value="Eukaryota"/>
</dbReference>
<dbReference type="HOGENOM" id="CLU_037792_0_0_1"/>
<dbReference type="InParanoid" id="Q08CH3"/>
<dbReference type="OMA" id="VEMVYVQ"/>
<dbReference type="OrthoDB" id="167806at2759"/>
<dbReference type="PhylomeDB" id="Q08CH3"/>
<dbReference type="TreeFam" id="TF324811"/>
<dbReference type="PRO" id="PR:Q08CH3"/>
<dbReference type="Proteomes" id="UP000000437">
    <property type="component" value="Chromosome 8"/>
</dbReference>
<dbReference type="Bgee" id="ENSDARG00000061989">
    <property type="expression patterns" value="Expressed in presomitic mesoderm and 27 other cell types or tissues"/>
</dbReference>
<dbReference type="GO" id="GO:0070531">
    <property type="term" value="C:BRCA1-A complex"/>
    <property type="evidence" value="ECO:0000318"/>
    <property type="project" value="GO_Central"/>
</dbReference>
<dbReference type="GO" id="GO:0070552">
    <property type="term" value="C:BRISC complex"/>
    <property type="evidence" value="ECO:0000318"/>
    <property type="project" value="GO_Central"/>
</dbReference>
<dbReference type="GO" id="GO:0046872">
    <property type="term" value="F:metal ion binding"/>
    <property type="evidence" value="ECO:0007669"/>
    <property type="project" value="UniProtKB-KW"/>
</dbReference>
<dbReference type="GO" id="GO:0008237">
    <property type="term" value="F:metallopeptidase activity"/>
    <property type="evidence" value="ECO:0000318"/>
    <property type="project" value="GO_Central"/>
</dbReference>
<dbReference type="GO" id="GO:0031593">
    <property type="term" value="F:polyubiquitin modification-dependent protein binding"/>
    <property type="evidence" value="ECO:0000318"/>
    <property type="project" value="GO_Central"/>
</dbReference>
<dbReference type="GO" id="GO:0006302">
    <property type="term" value="P:double-strand break repair"/>
    <property type="evidence" value="ECO:0000318"/>
    <property type="project" value="GO_Central"/>
</dbReference>
<dbReference type="GO" id="GO:0006508">
    <property type="term" value="P:proteolysis"/>
    <property type="evidence" value="ECO:0007669"/>
    <property type="project" value="UniProtKB-KW"/>
</dbReference>
<dbReference type="CDD" id="cd08067">
    <property type="entry name" value="MPN_2A_DUB"/>
    <property type="match status" value="1"/>
</dbReference>
<dbReference type="FunFam" id="3.40.140.10:FF:000053">
    <property type="entry name" value="MPN domain-containing protein CG4751"/>
    <property type="match status" value="1"/>
</dbReference>
<dbReference type="Gene3D" id="3.40.140.10">
    <property type="entry name" value="Cytidine Deaminase, domain 2"/>
    <property type="match status" value="1"/>
</dbReference>
<dbReference type="InterPro" id="IPR000555">
    <property type="entry name" value="JAMM/MPN+_dom"/>
</dbReference>
<dbReference type="InterPro" id="IPR050242">
    <property type="entry name" value="JAMM_MPN+_peptidase_M67A"/>
</dbReference>
<dbReference type="InterPro" id="IPR037518">
    <property type="entry name" value="MPN"/>
</dbReference>
<dbReference type="InterPro" id="IPR040843">
    <property type="entry name" value="RAMA"/>
</dbReference>
<dbReference type="PANTHER" id="PTHR10410">
    <property type="entry name" value="EUKARYOTIC TRANSLATION INITIATION FACTOR 3 -RELATED"/>
    <property type="match status" value="1"/>
</dbReference>
<dbReference type="Pfam" id="PF01398">
    <property type="entry name" value="JAB"/>
    <property type="match status" value="1"/>
</dbReference>
<dbReference type="Pfam" id="PF18755">
    <property type="entry name" value="RAMA"/>
    <property type="match status" value="1"/>
</dbReference>
<dbReference type="SUPFAM" id="SSF102712">
    <property type="entry name" value="JAB1/MPN domain"/>
    <property type="match status" value="1"/>
</dbReference>
<dbReference type="PROSITE" id="PS50249">
    <property type="entry name" value="MPN"/>
    <property type="match status" value="1"/>
</dbReference>
<proteinExistence type="evidence at transcript level"/>